<reference key="1">
    <citation type="journal article" date="2006" name="Biochim. Biophys. Acta">
        <title>Dusty protein kinases: primary structure, gene evolution, tissue specific expression and unique features of the catalytic domain.</title>
        <authorList>
            <person name="Peng J."/>
            <person name="Dong W."/>
            <person name="Chen Y."/>
            <person name="Mo R."/>
            <person name="Cheng J.-F."/>
            <person name="Hui C.-C."/>
            <person name="Mohandas N."/>
            <person name="Huang C.-H."/>
        </authorList>
    </citation>
    <scope>NUCLEOTIDE SEQUENCE [MRNA] (ISOFORMS 1 AND 2)</scope>
</reference>
<sequence length="921" mass="103845">MEGHGPQKSSPLARDLTRAFNGYHKQTVLLKKNLKETHAFFREMRQNYSNTCASSTLSSDSASLETSQFSCISFPSHEEEFLRNTVGAAPYILVLGQDCAARYQLLNCLLGERLLPLGPQAGHACHGGQGSTCKRRKLCFTHGKQTRLSLALPGQYELVHQLVANCGRWDTVPREDLEILDECEDPAHRQAELEITLHHPMLQEAKVMVVPCPSVQPIEEAIEDCTRSAIPIVLYAVNQDSLSSEQVADLWKVKEILSFPICFVRLPNLSEDSSEPGQRFEKDKSKLQKQLLSHGLLTCPMGNCSCGAPTQMPTPGAKPQSVLGENFERLHRILVPFTRQVLQNQQVEAASLLNGLHCRCLDLFINQAFDMQRDLQITPRRLEYTREKEGELFTSLMAIANRKQEEMKDMIVETLGSMKEQLLEDAANLEFTDIIVTTNGDPVTSKEIKSCIHQIQDLIVVRLNQAVANKLISSVDYLRESFVGTLERCLDSLEKSHIESSVHNITSNHLKQLLNAAYHVEVTFHSGSSVTRLFWEQIKQIIHRITFVNPPAITPEWKRKVAQDAIESLSAAKLARSICSQFRTRLNSSHEAFAASLRQLEERHTGRLERTEDLWLRVRKDHAPRLARLSLESRSLRDVLLHGKPKLGRELGRGQYGVVYLCDNWGGHYPCALKSVVPPDDKHWNDLALEFHYTRTLPKHERLVDLHGSVIDHTYAGGSSIAVLLIMERLHRDLYTGLKAGLSLQERLQIALDVVEGIRFLHNQGLLHRDIKLKNVLLDKQNRAKITDLGFCKPEAMMSGSIVGTPIHMAPELFTGKYDNSVDVYAFGILFWYLCAGSVKLPEAFEKCSSKDQLWNNVKKGARPERLPCFDEECWQLMEACWNGDPSQRPLLGIVEPSLQSMMVRLCCGSEQKSSSLEDSS</sequence>
<protein>
    <recommendedName>
        <fullName>Dual serine/threonine and tyrosine protein kinase</fullName>
        <ecNumber>2.7.12.1</ecNumber>
    </recommendedName>
    <alternativeName>
        <fullName>Dusty protein kinase</fullName>
        <shortName>Dusty PK</shortName>
    </alternativeName>
    <alternativeName>
        <fullName>Receptor-interacting serine/threonine-protein kinase 5</fullName>
    </alternativeName>
</protein>
<gene>
    <name type="primary">dstyk</name>
    <name type="synonym">ripk5</name>
</gene>
<proteinExistence type="evidence at transcript level"/>
<feature type="chain" id="PRO_0000233124" description="Dual serine/threonine and tyrosine protein kinase">
    <location>
        <begin position="1"/>
        <end position="921"/>
    </location>
</feature>
<feature type="domain" description="Protein kinase" evidence="4">
    <location>
        <begin position="645"/>
        <end position="899"/>
    </location>
</feature>
<feature type="active site" description="Proton acceptor" evidence="4 5">
    <location>
        <position position="770"/>
    </location>
</feature>
<feature type="binding site" evidence="4">
    <location>
        <begin position="651"/>
        <end position="659"/>
    </location>
    <ligand>
        <name>ATP</name>
        <dbReference type="ChEBI" id="CHEBI:30616"/>
    </ligand>
</feature>
<feature type="binding site" evidence="4">
    <location>
        <position position="674"/>
    </location>
    <ligand>
        <name>ATP</name>
        <dbReference type="ChEBI" id="CHEBI:30616"/>
    </ligand>
</feature>
<feature type="splice variant" id="VSP_018041" description="In isoform 2." evidence="6">
    <location>
        <begin position="513"/>
        <end position="540"/>
    </location>
</feature>
<feature type="splice variant" id="VSP_018042" description="In isoform 2." evidence="6">
    <location>
        <begin position="817"/>
        <end position="861"/>
    </location>
</feature>
<dbReference type="EC" id="2.7.12.1"/>
<dbReference type="EMBL" id="AY208854">
    <property type="protein sequence ID" value="AAP42422.1"/>
    <property type="molecule type" value="mRNA"/>
</dbReference>
<dbReference type="EMBL" id="AY429680">
    <property type="protein sequence ID" value="AAS55396.1"/>
    <property type="molecule type" value="mRNA"/>
</dbReference>
<dbReference type="EMBL" id="AY641095">
    <property type="protein sequence ID" value="AAV40861.1"/>
    <property type="molecule type" value="mRNA"/>
</dbReference>
<dbReference type="RefSeq" id="NP_001027827.1">
    <molecule id="Q4VSN2-2"/>
    <property type="nucleotide sequence ID" value="NM_001032655.1"/>
</dbReference>
<dbReference type="RefSeq" id="XP_011612104.1">
    <property type="nucleotide sequence ID" value="XM_011613802.1"/>
</dbReference>
<dbReference type="SMR" id="Q4VSN2"/>
<dbReference type="FunCoup" id="Q4VSN2">
    <property type="interactions" value="1221"/>
</dbReference>
<dbReference type="STRING" id="31033.ENSTRUP00000082582"/>
<dbReference type="GeneID" id="445996"/>
<dbReference type="KEGG" id="tru:445996"/>
<dbReference type="CTD" id="25778"/>
<dbReference type="eggNOG" id="KOG0192">
    <property type="taxonomic scope" value="Eukaryota"/>
</dbReference>
<dbReference type="HOGENOM" id="CLU_014116_0_0_1"/>
<dbReference type="InParanoid" id="Q4VSN2"/>
<dbReference type="OrthoDB" id="122279at2759"/>
<dbReference type="Proteomes" id="UP000005226">
    <property type="component" value="Unplaced"/>
</dbReference>
<dbReference type="GO" id="GO:0070161">
    <property type="term" value="C:anchoring junction"/>
    <property type="evidence" value="ECO:0007669"/>
    <property type="project" value="UniProtKB-SubCell"/>
</dbReference>
<dbReference type="GO" id="GO:0016324">
    <property type="term" value="C:apical plasma membrane"/>
    <property type="evidence" value="ECO:0000250"/>
    <property type="project" value="UniProtKB"/>
</dbReference>
<dbReference type="GO" id="GO:0016323">
    <property type="term" value="C:basolateral plasma membrane"/>
    <property type="evidence" value="ECO:0000250"/>
    <property type="project" value="UniProtKB"/>
</dbReference>
<dbReference type="GO" id="GO:0005737">
    <property type="term" value="C:cytoplasm"/>
    <property type="evidence" value="ECO:0000250"/>
    <property type="project" value="UniProtKB"/>
</dbReference>
<dbReference type="GO" id="GO:0005524">
    <property type="term" value="F:ATP binding"/>
    <property type="evidence" value="ECO:0007669"/>
    <property type="project" value="UniProtKB-KW"/>
</dbReference>
<dbReference type="GO" id="GO:0106310">
    <property type="term" value="F:protein serine kinase activity"/>
    <property type="evidence" value="ECO:0007669"/>
    <property type="project" value="RHEA"/>
</dbReference>
<dbReference type="GO" id="GO:0004674">
    <property type="term" value="F:protein serine/threonine kinase activity"/>
    <property type="evidence" value="ECO:0007669"/>
    <property type="project" value="UniProtKB-KW"/>
</dbReference>
<dbReference type="GO" id="GO:0004712">
    <property type="term" value="F:protein serine/threonine/tyrosine kinase activity"/>
    <property type="evidence" value="ECO:0007669"/>
    <property type="project" value="UniProtKB-EC"/>
</dbReference>
<dbReference type="GO" id="GO:0004713">
    <property type="term" value="F:protein tyrosine kinase activity"/>
    <property type="evidence" value="ECO:0007669"/>
    <property type="project" value="UniProtKB-KW"/>
</dbReference>
<dbReference type="GO" id="GO:0044344">
    <property type="term" value="P:cellular response to fibroblast growth factor stimulus"/>
    <property type="evidence" value="ECO:0007669"/>
    <property type="project" value="TreeGrafter"/>
</dbReference>
<dbReference type="GO" id="GO:0048568">
    <property type="term" value="P:embryonic organ development"/>
    <property type="evidence" value="ECO:0000250"/>
    <property type="project" value="UniProtKB"/>
</dbReference>
<dbReference type="GO" id="GO:0043066">
    <property type="term" value="P:negative regulation of apoptotic process"/>
    <property type="evidence" value="ECO:0007669"/>
    <property type="project" value="TreeGrafter"/>
</dbReference>
<dbReference type="GO" id="GO:0070374">
    <property type="term" value="P:positive regulation of ERK1 and ERK2 cascade"/>
    <property type="evidence" value="ECO:0007669"/>
    <property type="project" value="TreeGrafter"/>
</dbReference>
<dbReference type="GO" id="GO:0045743">
    <property type="term" value="P:positive regulation of fibroblast growth factor receptor signaling pathway"/>
    <property type="evidence" value="ECO:0007669"/>
    <property type="project" value="TreeGrafter"/>
</dbReference>
<dbReference type="CDD" id="cd13975">
    <property type="entry name" value="PKc_Dusty"/>
    <property type="match status" value="1"/>
</dbReference>
<dbReference type="FunFam" id="1.10.510.10:FF:000244">
    <property type="entry name" value="Dual serine/threonine and tyrosine protein kinase"/>
    <property type="match status" value="1"/>
</dbReference>
<dbReference type="Gene3D" id="1.10.510.10">
    <property type="entry name" value="Transferase(Phosphotransferase) domain 1"/>
    <property type="match status" value="1"/>
</dbReference>
<dbReference type="InterPro" id="IPR051302">
    <property type="entry name" value="Dual_SerThr-Tyr_Kinase"/>
</dbReference>
<dbReference type="InterPro" id="IPR011009">
    <property type="entry name" value="Kinase-like_dom_sf"/>
</dbReference>
<dbReference type="InterPro" id="IPR000719">
    <property type="entry name" value="Prot_kinase_dom"/>
</dbReference>
<dbReference type="InterPro" id="IPR017441">
    <property type="entry name" value="Protein_kinase_ATP_BS"/>
</dbReference>
<dbReference type="InterPro" id="IPR008271">
    <property type="entry name" value="Ser/Thr_kinase_AS"/>
</dbReference>
<dbReference type="PANTHER" id="PTHR46392">
    <property type="entry name" value="DUAL SERINE/THREONINE AND TYROSINE PROTEIN KINASE"/>
    <property type="match status" value="1"/>
</dbReference>
<dbReference type="PANTHER" id="PTHR46392:SF1">
    <property type="entry name" value="DUAL SERINE_THREONINE AND TYROSINE PROTEIN KINASE"/>
    <property type="match status" value="1"/>
</dbReference>
<dbReference type="Pfam" id="PF00069">
    <property type="entry name" value="Pkinase"/>
    <property type="match status" value="1"/>
</dbReference>
<dbReference type="SMART" id="SM00220">
    <property type="entry name" value="S_TKc"/>
    <property type="match status" value="1"/>
</dbReference>
<dbReference type="SUPFAM" id="SSF56112">
    <property type="entry name" value="Protein kinase-like (PK-like)"/>
    <property type="match status" value="1"/>
</dbReference>
<dbReference type="PROSITE" id="PS00107">
    <property type="entry name" value="PROTEIN_KINASE_ATP"/>
    <property type="match status" value="1"/>
</dbReference>
<dbReference type="PROSITE" id="PS50011">
    <property type="entry name" value="PROTEIN_KINASE_DOM"/>
    <property type="match status" value="1"/>
</dbReference>
<dbReference type="PROSITE" id="PS00108">
    <property type="entry name" value="PROTEIN_KINASE_ST"/>
    <property type="match status" value="1"/>
</dbReference>
<organism>
    <name type="scientific">Takifugu rubripes</name>
    <name type="common">Japanese pufferfish</name>
    <name type="synonym">Fugu rubripes</name>
    <dbReference type="NCBI Taxonomy" id="31033"/>
    <lineage>
        <taxon>Eukaryota</taxon>
        <taxon>Metazoa</taxon>
        <taxon>Chordata</taxon>
        <taxon>Craniata</taxon>
        <taxon>Vertebrata</taxon>
        <taxon>Euteleostomi</taxon>
        <taxon>Actinopterygii</taxon>
        <taxon>Neopterygii</taxon>
        <taxon>Teleostei</taxon>
        <taxon>Neoteleostei</taxon>
        <taxon>Acanthomorphata</taxon>
        <taxon>Eupercaria</taxon>
        <taxon>Tetraodontiformes</taxon>
        <taxon>Tetradontoidea</taxon>
        <taxon>Tetraodontidae</taxon>
        <taxon>Takifugu</taxon>
    </lineage>
</organism>
<name>DUSTY_TAKRU</name>
<comment type="function">
    <text evidence="1 3">May act as a positive regulator of ERK phosphorylation downstream of fibroblast growth factor-receptor activation. May induce both caspase-dependent apoptosis and caspase-independent cell death. May play a role in the embryonic development.</text>
</comment>
<comment type="catalytic activity">
    <reaction>
        <text>L-seryl-[protein] + ATP = O-phospho-L-seryl-[protein] + ADP + H(+)</text>
        <dbReference type="Rhea" id="RHEA:17989"/>
        <dbReference type="Rhea" id="RHEA-COMP:9863"/>
        <dbReference type="Rhea" id="RHEA-COMP:11604"/>
        <dbReference type="ChEBI" id="CHEBI:15378"/>
        <dbReference type="ChEBI" id="CHEBI:29999"/>
        <dbReference type="ChEBI" id="CHEBI:30616"/>
        <dbReference type="ChEBI" id="CHEBI:83421"/>
        <dbReference type="ChEBI" id="CHEBI:456216"/>
        <dbReference type="EC" id="2.7.12.1"/>
    </reaction>
</comment>
<comment type="catalytic activity">
    <reaction>
        <text>L-threonyl-[protein] + ATP = O-phospho-L-threonyl-[protein] + ADP + H(+)</text>
        <dbReference type="Rhea" id="RHEA:46608"/>
        <dbReference type="Rhea" id="RHEA-COMP:11060"/>
        <dbReference type="Rhea" id="RHEA-COMP:11605"/>
        <dbReference type="ChEBI" id="CHEBI:15378"/>
        <dbReference type="ChEBI" id="CHEBI:30013"/>
        <dbReference type="ChEBI" id="CHEBI:30616"/>
        <dbReference type="ChEBI" id="CHEBI:61977"/>
        <dbReference type="ChEBI" id="CHEBI:456216"/>
        <dbReference type="EC" id="2.7.12.1"/>
    </reaction>
</comment>
<comment type="catalytic activity">
    <reaction>
        <text>L-tyrosyl-[protein] + ATP = O-phospho-L-tyrosyl-[protein] + ADP + H(+)</text>
        <dbReference type="Rhea" id="RHEA:10596"/>
        <dbReference type="Rhea" id="RHEA-COMP:10136"/>
        <dbReference type="Rhea" id="RHEA-COMP:20101"/>
        <dbReference type="ChEBI" id="CHEBI:15378"/>
        <dbReference type="ChEBI" id="CHEBI:30616"/>
        <dbReference type="ChEBI" id="CHEBI:46858"/>
        <dbReference type="ChEBI" id="CHEBI:61978"/>
        <dbReference type="ChEBI" id="CHEBI:456216"/>
        <dbReference type="EC" id="2.7.12.1"/>
    </reaction>
</comment>
<comment type="subcellular location">
    <subcellularLocation>
        <location evidence="2">Cytoplasm</location>
    </subcellularLocation>
    <subcellularLocation>
        <location evidence="2">Cell membrane</location>
    </subcellularLocation>
    <subcellularLocation>
        <location evidence="2">Apical cell membrane</location>
    </subcellularLocation>
    <subcellularLocation>
        <location evidence="2">Basolateral cell membrane</location>
    </subcellularLocation>
    <subcellularLocation>
        <location evidence="2">Cell junction</location>
    </subcellularLocation>
</comment>
<comment type="alternative products">
    <event type="alternative splicing"/>
    <isoform>
        <id>Q4VSN2-1</id>
        <name>1</name>
        <sequence type="displayed"/>
    </isoform>
    <isoform>
        <id>Q4VSN2-2</id>
        <name>2</name>
        <sequence type="described" ref="VSP_018041 VSP_018042"/>
    </isoform>
</comment>
<comment type="similarity">
    <text evidence="4">Belongs to the protein kinase superfamily. Ser/Thr protein kinase family.</text>
</comment>
<accession>Q4VSN2</accession>
<accession>Q6XUW9</accession>
<keyword id="KW-0025">Alternative splicing</keyword>
<keyword id="KW-0067">ATP-binding</keyword>
<keyword id="KW-0965">Cell junction</keyword>
<keyword id="KW-1003">Cell membrane</keyword>
<keyword id="KW-0963">Cytoplasm</keyword>
<keyword id="KW-0217">Developmental protein</keyword>
<keyword id="KW-0418">Kinase</keyword>
<keyword id="KW-0472">Membrane</keyword>
<keyword id="KW-0547">Nucleotide-binding</keyword>
<keyword id="KW-1185">Reference proteome</keyword>
<keyword id="KW-0723">Serine/threonine-protein kinase</keyword>
<keyword id="KW-0808">Transferase</keyword>
<keyword id="KW-0829">Tyrosine-protein kinase</keyword>
<evidence type="ECO:0000250" key="1">
    <source>
        <dbReference type="UniProtKB" id="Q4VSN1"/>
    </source>
</evidence>
<evidence type="ECO:0000250" key="2">
    <source>
        <dbReference type="UniProtKB" id="Q6XUX1"/>
    </source>
</evidence>
<evidence type="ECO:0000250" key="3">
    <source>
        <dbReference type="UniProtKB" id="Q6XUX3"/>
    </source>
</evidence>
<evidence type="ECO:0000255" key="4">
    <source>
        <dbReference type="PROSITE-ProRule" id="PRU00159"/>
    </source>
</evidence>
<evidence type="ECO:0000255" key="5">
    <source>
        <dbReference type="PROSITE-ProRule" id="PRU10027"/>
    </source>
</evidence>
<evidence type="ECO:0000303" key="6">
    <source>
    </source>
</evidence>